<reference key="1">
    <citation type="submission" date="2007-11" db="EMBL/GenBank/DDBJ databases">
        <authorList>
            <consortium name="The Salmonella enterica serovar Paratyphi B Genome Sequencing Project"/>
            <person name="McClelland M."/>
            <person name="Sanderson E.K."/>
            <person name="Porwollik S."/>
            <person name="Spieth J."/>
            <person name="Clifton W.S."/>
            <person name="Fulton R."/>
            <person name="Cordes M."/>
            <person name="Wollam A."/>
            <person name="Shah N."/>
            <person name="Pepin K."/>
            <person name="Bhonagiri V."/>
            <person name="Nash W."/>
            <person name="Johnson M."/>
            <person name="Thiruvilangam P."/>
            <person name="Wilson R."/>
        </authorList>
    </citation>
    <scope>NUCLEOTIDE SEQUENCE [LARGE SCALE GENOMIC DNA]</scope>
    <source>
        <strain>ATCC BAA-1250 / SPB7</strain>
    </source>
</reference>
<dbReference type="EC" id="2.1.3.-" evidence="1"/>
<dbReference type="EMBL" id="CP000886">
    <property type="protein sequence ID" value="ABX66670.1"/>
    <property type="molecule type" value="Genomic_DNA"/>
</dbReference>
<dbReference type="RefSeq" id="WP_000019610.1">
    <property type="nucleotide sequence ID" value="NC_010102.1"/>
</dbReference>
<dbReference type="SMR" id="A9MUB4"/>
<dbReference type="KEGG" id="spq:SPAB_01258"/>
<dbReference type="PATRIC" id="fig|1016998.12.peg.1185"/>
<dbReference type="HOGENOM" id="CLU_078475_0_0_6"/>
<dbReference type="BioCyc" id="SENT1016998:SPAB_RS05220-MONOMER"/>
<dbReference type="Proteomes" id="UP000008556">
    <property type="component" value="Chromosome"/>
</dbReference>
<dbReference type="GO" id="GO:0016743">
    <property type="term" value="F:carboxyl- or carbamoyltransferase activity"/>
    <property type="evidence" value="ECO:0007669"/>
    <property type="project" value="UniProtKB-UniRule"/>
</dbReference>
<dbReference type="GO" id="GO:1904047">
    <property type="term" value="F:S-adenosyl-L-methionine binding"/>
    <property type="evidence" value="ECO:0007669"/>
    <property type="project" value="UniProtKB-UniRule"/>
</dbReference>
<dbReference type="GO" id="GO:0002098">
    <property type="term" value="P:tRNA wobble uridine modification"/>
    <property type="evidence" value="ECO:0007669"/>
    <property type="project" value="InterPro"/>
</dbReference>
<dbReference type="CDD" id="cd02440">
    <property type="entry name" value="AdoMet_MTases"/>
    <property type="match status" value="1"/>
</dbReference>
<dbReference type="FunFam" id="3.40.50.150:FF:000030">
    <property type="entry name" value="Carboxy-S-adenosyl-L-methionine synthase"/>
    <property type="match status" value="1"/>
</dbReference>
<dbReference type="Gene3D" id="3.40.50.150">
    <property type="entry name" value="Vaccinia Virus protein VP39"/>
    <property type="match status" value="1"/>
</dbReference>
<dbReference type="HAMAP" id="MF_01589">
    <property type="entry name" value="Cx_SAM_synthase"/>
    <property type="match status" value="1"/>
</dbReference>
<dbReference type="InterPro" id="IPR005271">
    <property type="entry name" value="CmoA"/>
</dbReference>
<dbReference type="InterPro" id="IPR041698">
    <property type="entry name" value="Methyltransf_25"/>
</dbReference>
<dbReference type="InterPro" id="IPR029063">
    <property type="entry name" value="SAM-dependent_MTases_sf"/>
</dbReference>
<dbReference type="NCBIfam" id="TIGR00740">
    <property type="entry name" value="carboxy-S-adenosyl-L-methionine synthase CmoA"/>
    <property type="match status" value="1"/>
</dbReference>
<dbReference type="NCBIfam" id="NF011995">
    <property type="entry name" value="PRK15451.1"/>
    <property type="match status" value="1"/>
</dbReference>
<dbReference type="PANTHER" id="PTHR43861:SF2">
    <property type="entry name" value="CARBOXY-S-ADENOSYL-L-METHIONINE SYNTHASE"/>
    <property type="match status" value="1"/>
</dbReference>
<dbReference type="PANTHER" id="PTHR43861">
    <property type="entry name" value="TRANS-ACONITATE 2-METHYLTRANSFERASE-RELATED"/>
    <property type="match status" value="1"/>
</dbReference>
<dbReference type="Pfam" id="PF13649">
    <property type="entry name" value="Methyltransf_25"/>
    <property type="match status" value="1"/>
</dbReference>
<dbReference type="PIRSF" id="PIRSF006325">
    <property type="entry name" value="MeTrfase_bac"/>
    <property type="match status" value="1"/>
</dbReference>
<dbReference type="SUPFAM" id="SSF53335">
    <property type="entry name" value="S-adenosyl-L-methionine-dependent methyltransferases"/>
    <property type="match status" value="1"/>
</dbReference>
<sequence>MSHRDTLFSAPIARLGDWTFDERVAEVFPDMIQRSVPGYSNIISMIGMLAERFVQPNTQVYDLGCSLGAATLSVRRNIRHEHCRIIAVDNSPAMIERCRRHIDAYKAPTPVEVVEGDIRDITIENASMVVLNFTLQFLEPAERQALLDKIYLGLNPGGALVLSEKFSFEDAKVGELLFNMHHDFKRANGYSELEISQKRSMLENVMLTDSVETHKSRLRKAGFEHSELWFQCFNFGSLVALKAGVAA</sequence>
<proteinExistence type="inferred from homology"/>
<accession>A9MUB4</accession>
<feature type="chain" id="PRO_1000087962" description="Carboxy-S-adenosyl-L-methionine synthase">
    <location>
        <begin position="1"/>
        <end position="247"/>
    </location>
</feature>
<feature type="binding site" evidence="1">
    <location>
        <position position="39"/>
    </location>
    <ligand>
        <name>S-adenosyl-L-methionine</name>
        <dbReference type="ChEBI" id="CHEBI:59789"/>
    </ligand>
</feature>
<feature type="binding site" evidence="1">
    <location>
        <begin position="64"/>
        <end position="66"/>
    </location>
    <ligand>
        <name>S-adenosyl-L-methionine</name>
        <dbReference type="ChEBI" id="CHEBI:59789"/>
    </ligand>
</feature>
<feature type="binding site" evidence="1">
    <location>
        <begin position="89"/>
        <end position="90"/>
    </location>
    <ligand>
        <name>S-adenosyl-L-methionine</name>
        <dbReference type="ChEBI" id="CHEBI:59789"/>
    </ligand>
</feature>
<feature type="binding site" evidence="1">
    <location>
        <begin position="117"/>
        <end position="118"/>
    </location>
    <ligand>
        <name>S-adenosyl-L-methionine</name>
        <dbReference type="ChEBI" id="CHEBI:59789"/>
    </ligand>
</feature>
<feature type="binding site" evidence="1">
    <location>
        <position position="132"/>
    </location>
    <ligand>
        <name>S-adenosyl-L-methionine</name>
        <dbReference type="ChEBI" id="CHEBI:59789"/>
    </ligand>
</feature>
<feature type="binding site" evidence="1">
    <location>
        <position position="199"/>
    </location>
    <ligand>
        <name>S-adenosyl-L-methionine</name>
        <dbReference type="ChEBI" id="CHEBI:59789"/>
    </ligand>
</feature>
<gene>
    <name evidence="1" type="primary">cmoA</name>
    <name type="ordered locus">SPAB_01258</name>
</gene>
<comment type="function">
    <text evidence="1">Catalyzes the conversion of S-adenosyl-L-methionine (SAM) to carboxy-S-adenosyl-L-methionine (Cx-SAM).</text>
</comment>
<comment type="catalytic activity">
    <reaction evidence="1">
        <text>prephenate + S-adenosyl-L-methionine = carboxy-S-adenosyl-L-methionine + 3-phenylpyruvate + H2O</text>
        <dbReference type="Rhea" id="RHEA:51692"/>
        <dbReference type="ChEBI" id="CHEBI:15377"/>
        <dbReference type="ChEBI" id="CHEBI:18005"/>
        <dbReference type="ChEBI" id="CHEBI:29934"/>
        <dbReference type="ChEBI" id="CHEBI:59789"/>
        <dbReference type="ChEBI" id="CHEBI:134278"/>
    </reaction>
</comment>
<comment type="subunit">
    <text evidence="1">Homodimer.</text>
</comment>
<comment type="similarity">
    <text evidence="1">Belongs to the class I-like SAM-binding methyltransferase superfamily. Cx-SAM synthase family.</text>
</comment>
<evidence type="ECO:0000255" key="1">
    <source>
        <dbReference type="HAMAP-Rule" id="MF_01589"/>
    </source>
</evidence>
<organism>
    <name type="scientific">Salmonella paratyphi B (strain ATCC BAA-1250 / SPB7)</name>
    <dbReference type="NCBI Taxonomy" id="1016998"/>
    <lineage>
        <taxon>Bacteria</taxon>
        <taxon>Pseudomonadati</taxon>
        <taxon>Pseudomonadota</taxon>
        <taxon>Gammaproteobacteria</taxon>
        <taxon>Enterobacterales</taxon>
        <taxon>Enterobacteriaceae</taxon>
        <taxon>Salmonella</taxon>
    </lineage>
</organism>
<keyword id="KW-0949">S-adenosyl-L-methionine</keyword>
<keyword id="KW-0808">Transferase</keyword>
<name>CMOA_SALPB</name>
<protein>
    <recommendedName>
        <fullName evidence="1">Carboxy-S-adenosyl-L-methionine synthase</fullName>
        <shortName evidence="1">Cx-SAM synthase</shortName>
        <ecNumber evidence="1">2.1.3.-</ecNumber>
    </recommendedName>
</protein>